<sequence length="253" mass="27746">MTTIDLNCNLGESFGAYKMGNDDEILPFVSSINVACGFHAGDPSVMRQTVEKAMQHNVAIGAHPGFPDLIGFGRRNMNVSANEVYDYVLYQIDALDAFVKAAGGKMQHVKPHGALYNMAATNPEIADAIAKAIYHMNSSLSLYGLANSEAFIQAAEKYNITLVQEAFADRTYKEDGTLTSRTEENALIKNEDEAIKQVLQMVKEGYVNSVNGEKVAVQAQTICLHGDGEKAVQFARKIYRTFEHNKISICAPK</sequence>
<accession>C3LDU8</accession>
<evidence type="ECO:0000255" key="1">
    <source>
        <dbReference type="HAMAP-Rule" id="MF_00691"/>
    </source>
</evidence>
<organism>
    <name type="scientific">Bacillus anthracis (strain CDC 684 / NRRL 3495)</name>
    <dbReference type="NCBI Taxonomy" id="568206"/>
    <lineage>
        <taxon>Bacteria</taxon>
        <taxon>Bacillati</taxon>
        <taxon>Bacillota</taxon>
        <taxon>Bacilli</taxon>
        <taxon>Bacillales</taxon>
        <taxon>Bacillaceae</taxon>
        <taxon>Bacillus</taxon>
        <taxon>Bacillus cereus group</taxon>
    </lineage>
</organism>
<name>PXPA_BACAC</name>
<dbReference type="EC" id="3.5.2.9" evidence="1"/>
<dbReference type="EMBL" id="CP001215">
    <property type="protein sequence ID" value="ACP12581.1"/>
    <property type="molecule type" value="Genomic_DNA"/>
</dbReference>
<dbReference type="RefSeq" id="WP_000207357.1">
    <property type="nucleotide sequence ID" value="NC_012581.1"/>
</dbReference>
<dbReference type="SMR" id="C3LDU8"/>
<dbReference type="KEGG" id="bah:BAMEG_1513"/>
<dbReference type="HOGENOM" id="CLU_069535_0_0_9"/>
<dbReference type="GO" id="GO:0017168">
    <property type="term" value="F:5-oxoprolinase (ATP-hydrolyzing) activity"/>
    <property type="evidence" value="ECO:0007669"/>
    <property type="project" value="UniProtKB-UniRule"/>
</dbReference>
<dbReference type="GO" id="GO:0005524">
    <property type="term" value="F:ATP binding"/>
    <property type="evidence" value="ECO:0007669"/>
    <property type="project" value="UniProtKB-UniRule"/>
</dbReference>
<dbReference type="GO" id="GO:0005975">
    <property type="term" value="P:carbohydrate metabolic process"/>
    <property type="evidence" value="ECO:0007669"/>
    <property type="project" value="InterPro"/>
</dbReference>
<dbReference type="CDD" id="cd10787">
    <property type="entry name" value="LamB_YcsF_like"/>
    <property type="match status" value="1"/>
</dbReference>
<dbReference type="Gene3D" id="3.20.20.370">
    <property type="entry name" value="Glycoside hydrolase/deacetylase"/>
    <property type="match status" value="1"/>
</dbReference>
<dbReference type="HAMAP" id="MF_00691">
    <property type="entry name" value="PxpA"/>
    <property type="match status" value="1"/>
</dbReference>
<dbReference type="InterPro" id="IPR011330">
    <property type="entry name" value="Glyco_hydro/deAcase_b/a-brl"/>
</dbReference>
<dbReference type="InterPro" id="IPR005501">
    <property type="entry name" value="LamB/YcsF/PxpA-like"/>
</dbReference>
<dbReference type="NCBIfam" id="NF003813">
    <property type="entry name" value="PRK05406.1-2"/>
    <property type="match status" value="1"/>
</dbReference>
<dbReference type="NCBIfam" id="NF003814">
    <property type="entry name" value="PRK05406.1-3"/>
    <property type="match status" value="1"/>
</dbReference>
<dbReference type="NCBIfam" id="NF003816">
    <property type="entry name" value="PRK05406.1-5"/>
    <property type="match status" value="1"/>
</dbReference>
<dbReference type="PANTHER" id="PTHR30292:SF0">
    <property type="entry name" value="5-OXOPROLINASE SUBUNIT A"/>
    <property type="match status" value="1"/>
</dbReference>
<dbReference type="PANTHER" id="PTHR30292">
    <property type="entry name" value="UNCHARACTERIZED PROTEIN YBGL-RELATED"/>
    <property type="match status" value="1"/>
</dbReference>
<dbReference type="Pfam" id="PF03746">
    <property type="entry name" value="LamB_YcsF"/>
    <property type="match status" value="1"/>
</dbReference>
<dbReference type="SUPFAM" id="SSF88713">
    <property type="entry name" value="Glycoside hydrolase/deacetylase"/>
    <property type="match status" value="1"/>
</dbReference>
<keyword id="KW-0067">ATP-binding</keyword>
<keyword id="KW-0378">Hydrolase</keyword>
<keyword id="KW-0547">Nucleotide-binding</keyword>
<proteinExistence type="inferred from homology"/>
<comment type="function">
    <text evidence="1">Catalyzes the cleavage of 5-oxoproline to form L-glutamate coupled to the hydrolysis of ATP to ADP and inorganic phosphate.</text>
</comment>
<comment type="catalytic activity">
    <reaction evidence="1">
        <text>5-oxo-L-proline + ATP + 2 H2O = L-glutamate + ADP + phosphate + H(+)</text>
        <dbReference type="Rhea" id="RHEA:10348"/>
        <dbReference type="ChEBI" id="CHEBI:15377"/>
        <dbReference type="ChEBI" id="CHEBI:15378"/>
        <dbReference type="ChEBI" id="CHEBI:29985"/>
        <dbReference type="ChEBI" id="CHEBI:30616"/>
        <dbReference type="ChEBI" id="CHEBI:43474"/>
        <dbReference type="ChEBI" id="CHEBI:58402"/>
        <dbReference type="ChEBI" id="CHEBI:456216"/>
        <dbReference type="EC" id="3.5.2.9"/>
    </reaction>
</comment>
<comment type="subunit">
    <text evidence="1">Forms a complex composed of PxpA, PxpB and PxpC.</text>
</comment>
<comment type="similarity">
    <text evidence="1">Belongs to the LamB/PxpA family.</text>
</comment>
<protein>
    <recommendedName>
        <fullName evidence="1">5-oxoprolinase subunit A</fullName>
        <shortName evidence="1">5-OPase subunit A</shortName>
        <ecNumber evidence="1">3.5.2.9</ecNumber>
    </recommendedName>
    <alternativeName>
        <fullName evidence="1">5-oxoprolinase (ATP-hydrolyzing) subunit A</fullName>
    </alternativeName>
</protein>
<feature type="chain" id="PRO_1000200448" description="5-oxoprolinase subunit A">
    <location>
        <begin position="1"/>
        <end position="253"/>
    </location>
</feature>
<gene>
    <name evidence="1" type="primary">pxpA</name>
    <name type="ordered locus">BAMEG_1513</name>
</gene>
<reference key="1">
    <citation type="submission" date="2008-10" db="EMBL/GenBank/DDBJ databases">
        <title>Genome sequence of Bacillus anthracis str. CDC 684.</title>
        <authorList>
            <person name="Dodson R.J."/>
            <person name="Munk A.C."/>
            <person name="Brettin T."/>
            <person name="Bruce D."/>
            <person name="Detter C."/>
            <person name="Tapia R."/>
            <person name="Han C."/>
            <person name="Sutton G."/>
            <person name="Sims D."/>
        </authorList>
    </citation>
    <scope>NUCLEOTIDE SEQUENCE [LARGE SCALE GENOMIC DNA]</scope>
    <source>
        <strain>CDC 684 / NRRL 3495</strain>
    </source>
</reference>